<organism>
    <name type="scientific">Ginglymostoma cirratum</name>
    <name type="common">Nurse shark</name>
    <name type="synonym">Squalus cirratus</name>
    <dbReference type="NCBI Taxonomy" id="7801"/>
    <lineage>
        <taxon>Eukaryota</taxon>
        <taxon>Metazoa</taxon>
        <taxon>Chordata</taxon>
        <taxon>Craniata</taxon>
        <taxon>Vertebrata</taxon>
        <taxon>Chondrichthyes</taxon>
        <taxon>Elasmobranchii</taxon>
        <taxon>Galeomorphii</taxon>
        <taxon>Galeoidea</taxon>
        <taxon>Orectolobiformes</taxon>
        <taxon>Ginglymostomatidae</taxon>
        <taxon>Ginglymostoma</taxon>
    </lineage>
</organism>
<feature type="chain" id="PRO_0000059861" description="Pancreatic IgW, short secretory form">
    <location>
        <begin position="1" status="less than"/>
        <end position="190"/>
    </location>
</feature>
<feature type="domain" description="Ig-like C1-type">
    <location>
        <begin position="53"/>
        <end position="145"/>
    </location>
</feature>
<feature type="glycosylation site" description="N-linked (GlcNAc...) asparagine" evidence="2">
    <location>
        <position position="54"/>
    </location>
</feature>
<feature type="glycosylation site" description="N-linked (GlcNAc...) asparagine" evidence="2">
    <location>
        <position position="179"/>
    </location>
</feature>
<feature type="disulfide bond" evidence="1 3">
    <location>
        <begin position="74"/>
        <end position="131"/>
    </location>
</feature>
<feature type="non-terminal residue" evidence="5">
    <location>
        <position position="1"/>
    </location>
</feature>
<accession>P83984</accession>
<comment type="subcellular location">
    <subcellularLocation>
        <location evidence="5">Secreted</location>
    </subcellularLocation>
</comment>
<comment type="tissue specificity">
    <text evidence="4">Expressed in pancreas, spleen, epigonal organ and at low levels in several other tissues.</text>
</comment>
<proteinExistence type="evidence at transcript level"/>
<dbReference type="SMR" id="P83984"/>
<dbReference type="GO" id="GO:0005576">
    <property type="term" value="C:extracellular region"/>
    <property type="evidence" value="ECO:0007669"/>
    <property type="project" value="UniProtKB-SubCell"/>
</dbReference>
<dbReference type="GO" id="GO:0019814">
    <property type="term" value="C:immunoglobulin complex"/>
    <property type="evidence" value="ECO:0007669"/>
    <property type="project" value="UniProtKB-KW"/>
</dbReference>
<dbReference type="GO" id="GO:0002250">
    <property type="term" value="P:adaptive immune response"/>
    <property type="evidence" value="ECO:0007669"/>
    <property type="project" value="UniProtKB-KW"/>
</dbReference>
<dbReference type="CDD" id="cd00098">
    <property type="entry name" value="IgC1"/>
    <property type="match status" value="1"/>
</dbReference>
<dbReference type="FunFam" id="2.60.40.10:FF:000283">
    <property type="entry name" value="Immunoglobulin kappa constant"/>
    <property type="match status" value="1"/>
</dbReference>
<dbReference type="Gene3D" id="2.60.40.10">
    <property type="entry name" value="Immunoglobulins"/>
    <property type="match status" value="1"/>
</dbReference>
<dbReference type="InterPro" id="IPR007110">
    <property type="entry name" value="Ig-like_dom"/>
</dbReference>
<dbReference type="InterPro" id="IPR036179">
    <property type="entry name" value="Ig-like_dom_sf"/>
</dbReference>
<dbReference type="InterPro" id="IPR013783">
    <property type="entry name" value="Ig-like_fold"/>
</dbReference>
<dbReference type="InterPro" id="IPR003006">
    <property type="entry name" value="Ig/MHC_CS"/>
</dbReference>
<dbReference type="InterPro" id="IPR003597">
    <property type="entry name" value="Ig_C1-set"/>
</dbReference>
<dbReference type="InterPro" id="IPR050380">
    <property type="entry name" value="Immune_Resp_Modulators"/>
</dbReference>
<dbReference type="PANTHER" id="PTHR23411">
    <property type="entry name" value="TAPASIN"/>
    <property type="match status" value="1"/>
</dbReference>
<dbReference type="Pfam" id="PF07654">
    <property type="entry name" value="C1-set"/>
    <property type="match status" value="1"/>
</dbReference>
<dbReference type="SMART" id="SM00407">
    <property type="entry name" value="IGc1"/>
    <property type="match status" value="1"/>
</dbReference>
<dbReference type="SUPFAM" id="SSF48726">
    <property type="entry name" value="Immunoglobulin"/>
    <property type="match status" value="2"/>
</dbReference>
<dbReference type="PROSITE" id="PS50835">
    <property type="entry name" value="IG_LIKE"/>
    <property type="match status" value="1"/>
</dbReference>
<dbReference type="PROSITE" id="PS00290">
    <property type="entry name" value="IG_MHC"/>
    <property type="match status" value="1"/>
</dbReference>
<sequence>PAVQGNDKKYTMSSVLKVSAADWKTNRFYQCQAGYNLNDMVESRFETPKIQEPNITALVPSVDFISSQNAVLGCVISGFAPDNIRVSWKKDQVDQTGVVLSSKRRTDNTFETISYLIIPTVNWKIGDKYTCEVSHPPSNFRSMISMKYQEGEKSSCPSGSPPGTCPPCSLTPELLYHTNLSVTLRNGEKH</sequence>
<evidence type="ECO:0000250" key="1">
    <source>
        <dbReference type="UniProtKB" id="P01842"/>
    </source>
</evidence>
<evidence type="ECO:0000255" key="2"/>
<evidence type="ECO:0000255" key="3">
    <source>
        <dbReference type="PROSITE-ProRule" id="PRU00114"/>
    </source>
</evidence>
<evidence type="ECO:0000269" key="4">
    <source>
    </source>
</evidence>
<evidence type="ECO:0000303" key="5">
    <source>
    </source>
</evidence>
<evidence type="ECO:0000305" key="6"/>
<keyword id="KW-1064">Adaptive immunity</keyword>
<keyword id="KW-1015">Disulfide bond</keyword>
<keyword id="KW-0325">Glycoprotein</keyword>
<keyword id="KW-0391">Immunity</keyword>
<keyword id="KW-1280">Immunoglobulin</keyword>
<keyword id="KW-0393">Immunoglobulin domain</keyword>
<keyword id="KW-0964">Secreted</keyword>
<reference evidence="6" key="1">
    <citation type="journal article" date="2004" name="J. Immunol.">
        <title>Unprecedented multiplicity of Ig transmembrane and secretory mRNA forms in the cartilaginous fish.</title>
        <authorList>
            <person name="Rumfelt L.L."/>
            <person name="Diaz M."/>
            <person name="Lohr R.L."/>
            <person name="Mochon E."/>
            <person name="Flajnik M.F."/>
        </authorList>
    </citation>
    <scope>NUCLEOTIDE SEQUENCE</scope>
    <scope>TISSUE SPECIFICITY</scope>
    <source>
        <tissue evidence="4">Pancreas</tissue>
    </source>
</reference>
<protein>
    <recommendedName>
        <fullName>Pancreatic IgW, short secretory form</fullName>
    </recommendedName>
</protein>
<name>IGWP_GINCI</name>